<organism>
    <name type="scientific">Streptococcus pyogenes serotype M12 (strain MGAS9429)</name>
    <dbReference type="NCBI Taxonomy" id="370551"/>
    <lineage>
        <taxon>Bacteria</taxon>
        <taxon>Bacillati</taxon>
        <taxon>Bacillota</taxon>
        <taxon>Bacilli</taxon>
        <taxon>Lactobacillales</taxon>
        <taxon>Streptococcaceae</taxon>
        <taxon>Streptococcus</taxon>
    </lineage>
</organism>
<name>Y300_STRPC</name>
<protein>
    <recommendedName>
        <fullName evidence="1">UPF0154 protein MGAS9429_Spy0300</fullName>
    </recommendedName>
</protein>
<gene>
    <name type="ordered locus">MGAS9429_Spy0300</name>
</gene>
<dbReference type="EMBL" id="CP000259">
    <property type="protein sequence ID" value="ABF31488.1"/>
    <property type="molecule type" value="Genomic_DNA"/>
</dbReference>
<dbReference type="RefSeq" id="WP_002985908.1">
    <property type="nucleotide sequence ID" value="NC_008021.1"/>
</dbReference>
<dbReference type="SMR" id="Q1JNB1"/>
<dbReference type="KEGG" id="spk:MGAS9429_Spy0300"/>
<dbReference type="HOGENOM" id="CLU_180108_0_0_9"/>
<dbReference type="Proteomes" id="UP000002433">
    <property type="component" value="Chromosome"/>
</dbReference>
<dbReference type="GO" id="GO:0005886">
    <property type="term" value="C:plasma membrane"/>
    <property type="evidence" value="ECO:0007669"/>
    <property type="project" value="UniProtKB-SubCell"/>
</dbReference>
<dbReference type="HAMAP" id="MF_00363">
    <property type="entry name" value="UPF0154"/>
    <property type="match status" value="1"/>
</dbReference>
<dbReference type="InterPro" id="IPR005359">
    <property type="entry name" value="UPF0154"/>
</dbReference>
<dbReference type="Pfam" id="PF03672">
    <property type="entry name" value="UPF0154"/>
    <property type="match status" value="1"/>
</dbReference>
<sequence length="80" mass="8894">MSTAIWILLLIVALGVGVFGGIFIARKQIEKEIGEHPRLTPEAIREMMSQMGQKPSEAKIQQTYRNIIKQSKAAVSKGKK</sequence>
<feature type="chain" id="PRO_1000005642" description="UPF0154 protein MGAS9429_Spy0300">
    <location>
        <begin position="1"/>
        <end position="80"/>
    </location>
</feature>
<feature type="transmembrane region" description="Helical" evidence="1">
    <location>
        <begin position="4"/>
        <end position="24"/>
    </location>
</feature>
<reference key="1">
    <citation type="journal article" date="2006" name="Proc. Natl. Acad. Sci. U.S.A.">
        <title>Molecular genetic anatomy of inter- and intraserotype variation in the human bacterial pathogen group A Streptococcus.</title>
        <authorList>
            <person name="Beres S.B."/>
            <person name="Richter E.W."/>
            <person name="Nagiec M.J."/>
            <person name="Sumby P."/>
            <person name="Porcella S.F."/>
            <person name="DeLeo F.R."/>
            <person name="Musser J.M."/>
        </authorList>
    </citation>
    <scope>NUCLEOTIDE SEQUENCE [LARGE SCALE GENOMIC DNA]</scope>
    <source>
        <strain>MGAS9429</strain>
    </source>
</reference>
<proteinExistence type="inferred from homology"/>
<accession>Q1JNB1</accession>
<comment type="subcellular location">
    <subcellularLocation>
        <location evidence="1">Cell membrane</location>
        <topology evidence="1">Single-pass membrane protein</topology>
    </subcellularLocation>
</comment>
<comment type="similarity">
    <text evidence="1">Belongs to the UPF0154 family.</text>
</comment>
<keyword id="KW-1003">Cell membrane</keyword>
<keyword id="KW-0472">Membrane</keyword>
<keyword id="KW-0812">Transmembrane</keyword>
<keyword id="KW-1133">Transmembrane helix</keyword>
<evidence type="ECO:0000255" key="1">
    <source>
        <dbReference type="HAMAP-Rule" id="MF_00363"/>
    </source>
</evidence>